<feature type="chain" id="PRO_0000117417" description="NADH-ubiquinone oxidoreductase chain 1">
    <location>
        <begin position="1"/>
        <end position="323"/>
    </location>
</feature>
<feature type="transmembrane region" description="Helical" evidence="2">
    <location>
        <begin position="8"/>
        <end position="28"/>
    </location>
</feature>
<feature type="transmembrane region" description="Helical" evidence="2">
    <location>
        <begin position="74"/>
        <end position="94"/>
    </location>
</feature>
<feature type="transmembrane region" description="Helical" evidence="2">
    <location>
        <begin position="105"/>
        <end position="125"/>
    </location>
</feature>
<feature type="transmembrane region" description="Helical" evidence="2">
    <location>
        <begin position="150"/>
        <end position="170"/>
    </location>
</feature>
<feature type="transmembrane region" description="Helical" evidence="2">
    <location>
        <begin position="176"/>
        <end position="196"/>
    </location>
</feature>
<feature type="transmembrane region" description="Helical" evidence="2">
    <location>
        <begin position="227"/>
        <end position="247"/>
    </location>
</feature>
<feature type="transmembrane region" description="Helical" evidence="2">
    <location>
        <begin position="258"/>
        <end position="278"/>
    </location>
</feature>
<feature type="transmembrane region" description="Helical" evidence="2">
    <location>
        <begin position="298"/>
        <end position="318"/>
    </location>
</feature>
<geneLocation type="mitochondrion"/>
<proteinExistence type="inferred from homology"/>
<keyword id="KW-0249">Electron transport</keyword>
<keyword id="KW-0472">Membrane</keyword>
<keyword id="KW-0496">Mitochondrion</keyword>
<keyword id="KW-0999">Mitochondrion inner membrane</keyword>
<keyword id="KW-0520">NAD</keyword>
<keyword id="KW-1185">Reference proteome</keyword>
<keyword id="KW-0679">Respiratory chain</keyword>
<keyword id="KW-1278">Translocase</keyword>
<keyword id="KW-0812">Transmembrane</keyword>
<keyword id="KW-1133">Transmembrane helix</keyword>
<keyword id="KW-0813">Transport</keyword>
<keyword id="KW-0830">Ubiquinone</keyword>
<comment type="function">
    <text evidence="1">Core subunit of the mitochondrial membrane respiratory chain NADH dehydrogenase (Complex I) that is believed to belong to the minimal assembly required for catalysis. Complex I functions in the transfer of electrons from NADH to the respiratory chain. The immediate electron acceptor for the enzyme is believed to be ubiquinone (By similarity).</text>
</comment>
<comment type="catalytic activity">
    <reaction>
        <text>a ubiquinone + NADH + 5 H(+)(in) = a ubiquinol + NAD(+) + 4 H(+)(out)</text>
        <dbReference type="Rhea" id="RHEA:29091"/>
        <dbReference type="Rhea" id="RHEA-COMP:9565"/>
        <dbReference type="Rhea" id="RHEA-COMP:9566"/>
        <dbReference type="ChEBI" id="CHEBI:15378"/>
        <dbReference type="ChEBI" id="CHEBI:16389"/>
        <dbReference type="ChEBI" id="CHEBI:17976"/>
        <dbReference type="ChEBI" id="CHEBI:57540"/>
        <dbReference type="ChEBI" id="CHEBI:57945"/>
        <dbReference type="EC" id="7.1.1.2"/>
    </reaction>
</comment>
<comment type="subcellular location">
    <subcellularLocation>
        <location evidence="1">Mitochondrion inner membrane</location>
        <topology evidence="1">Multi-pass membrane protein</topology>
    </subcellularLocation>
</comment>
<comment type="similarity">
    <text evidence="3">Belongs to the complex I subunit 1 family.</text>
</comment>
<protein>
    <recommendedName>
        <fullName>NADH-ubiquinone oxidoreductase chain 1</fullName>
        <ecNumber>7.1.1.2</ecNumber>
    </recommendedName>
    <alternativeName>
        <fullName>NADH dehydrogenase subunit 1</fullName>
    </alternativeName>
</protein>
<organism>
    <name type="scientific">Latimeria chalumnae</name>
    <name type="common">Coelacanth</name>
    <dbReference type="NCBI Taxonomy" id="7897"/>
    <lineage>
        <taxon>Eukaryota</taxon>
        <taxon>Metazoa</taxon>
        <taxon>Chordata</taxon>
        <taxon>Craniata</taxon>
        <taxon>Vertebrata</taxon>
        <taxon>Euteleostomi</taxon>
        <taxon>Coelacanthiformes</taxon>
        <taxon>Coelacanthidae</taxon>
        <taxon>Latimeria</taxon>
    </lineage>
</organism>
<name>NU1M_LATCH</name>
<accession>O03847</accession>
<sequence length="323" mass="35729">MTKIITHLLNPLAVIIPILLAVAFLTLIERKVLGYMQLRKGPNIVGPYGLLQPLADGLKLFIKEPVRPSTSSPLLFITTPMLALTMALTLWLPLPLPHPMTNLNLGMLFILAISSLTVYSILGSGWASNLKYALIGALRAVAQTISYEVSLGLILLAMIIFAGGFTLTTFNTSQETIWLLTPGWPLAAMWYISTLAETNRAPFDLTEGESELVSGFNVEYAGGPFALFFLAEYANILLMNTLSTILFMGAMHNPITPELTSINLMIKASALSMLFLWVRASYPRFRYDQLMHLVWKNFLPITLAMILWHTSLPIFTGSLPPQT</sequence>
<evidence type="ECO:0000250" key="1"/>
<evidence type="ECO:0000255" key="2"/>
<evidence type="ECO:0000305" key="3"/>
<gene>
    <name type="primary">MT-ND1</name>
    <name type="synonym">MTND1</name>
    <name type="synonym">NADH1</name>
    <name type="synonym">ND1</name>
</gene>
<dbReference type="EC" id="7.1.1.2"/>
<dbReference type="EMBL" id="U82228">
    <property type="protein sequence ID" value="AAC60318.1"/>
    <property type="molecule type" value="Genomic_DNA"/>
</dbReference>
<dbReference type="PIR" id="A58892">
    <property type="entry name" value="A58892"/>
</dbReference>
<dbReference type="RefSeq" id="NP_008329.1">
    <property type="nucleotide sequence ID" value="NC_001804.1"/>
</dbReference>
<dbReference type="SMR" id="O03847"/>
<dbReference type="FunCoup" id="O03847">
    <property type="interactions" value="506"/>
</dbReference>
<dbReference type="STRING" id="7897.ENSLACP00000021805"/>
<dbReference type="Ensembl" id="ENSLACT00000024845.1">
    <property type="protein sequence ID" value="ENSLACP00000021805.1"/>
    <property type="gene ID" value="ENSLACG00000022061.1"/>
</dbReference>
<dbReference type="GeneID" id="808083"/>
<dbReference type="KEGG" id="lcm:808083"/>
<dbReference type="CTD" id="4535"/>
<dbReference type="eggNOG" id="KOG4770">
    <property type="taxonomic scope" value="Eukaryota"/>
</dbReference>
<dbReference type="GeneTree" id="ENSGT00390000006621"/>
<dbReference type="HOGENOM" id="CLU_015134_0_1_1"/>
<dbReference type="InParanoid" id="O03847"/>
<dbReference type="OMA" id="WSGWASN"/>
<dbReference type="OrthoDB" id="531329at2759"/>
<dbReference type="TreeFam" id="TF352957"/>
<dbReference type="Proteomes" id="UP000008672">
    <property type="component" value="Mitochondrion"/>
</dbReference>
<dbReference type="Bgee" id="ENSLACG00000022061">
    <property type="expression patterns" value="Expressed in pelvic fin and 6 other cell types or tissues"/>
</dbReference>
<dbReference type="GO" id="GO:0005743">
    <property type="term" value="C:mitochondrial inner membrane"/>
    <property type="evidence" value="ECO:0007669"/>
    <property type="project" value="UniProtKB-SubCell"/>
</dbReference>
<dbReference type="GO" id="GO:0008137">
    <property type="term" value="F:NADH dehydrogenase (ubiquinone) activity"/>
    <property type="evidence" value="ECO:0007669"/>
    <property type="project" value="UniProtKB-EC"/>
</dbReference>
<dbReference type="GO" id="GO:0009060">
    <property type="term" value="P:aerobic respiration"/>
    <property type="evidence" value="ECO:0007669"/>
    <property type="project" value="TreeGrafter"/>
</dbReference>
<dbReference type="HAMAP" id="MF_01350">
    <property type="entry name" value="NDH1_NuoH"/>
    <property type="match status" value="1"/>
</dbReference>
<dbReference type="InterPro" id="IPR001694">
    <property type="entry name" value="NADH_UbQ_OxRdtase_su1/FPO"/>
</dbReference>
<dbReference type="InterPro" id="IPR018086">
    <property type="entry name" value="NADH_UbQ_OxRdtase_su1_CS"/>
</dbReference>
<dbReference type="PANTHER" id="PTHR11432">
    <property type="entry name" value="NADH DEHYDROGENASE SUBUNIT 1"/>
    <property type="match status" value="1"/>
</dbReference>
<dbReference type="PANTHER" id="PTHR11432:SF3">
    <property type="entry name" value="NADH-UBIQUINONE OXIDOREDUCTASE CHAIN 1"/>
    <property type="match status" value="1"/>
</dbReference>
<dbReference type="Pfam" id="PF00146">
    <property type="entry name" value="NADHdh"/>
    <property type="match status" value="1"/>
</dbReference>
<dbReference type="PROSITE" id="PS00667">
    <property type="entry name" value="COMPLEX1_ND1_1"/>
    <property type="match status" value="1"/>
</dbReference>
<dbReference type="PROSITE" id="PS00668">
    <property type="entry name" value="COMPLEX1_ND1_2"/>
    <property type="match status" value="1"/>
</dbReference>
<reference key="1">
    <citation type="journal article" date="1997" name="Genetics">
        <title>The complete DNA sequence of the mitochondrial genome of a 'living fossil,' the coelacanth (Latimeria chalumnae).</title>
        <authorList>
            <person name="Zardoya R."/>
            <person name="Meyer A."/>
        </authorList>
    </citation>
    <scope>NUCLEOTIDE SEQUENCE [LARGE SCALE GENOMIC DNA]</scope>
</reference>